<feature type="chain" id="PRO_0000373528" description="Uncharacterized protein E146L">
    <location>
        <begin position="1"/>
        <end position="146"/>
    </location>
</feature>
<feature type="transmembrane region" description="Helical" evidence="2">
    <location>
        <begin position="7"/>
        <end position="27"/>
    </location>
</feature>
<comment type="subcellular location">
    <subcellularLocation>
        <location evidence="3">Host membrane</location>
        <topology evidence="3">Single-pass membrane protein</topology>
    </subcellularLocation>
    <subcellularLocation>
        <location evidence="1">Virion</location>
    </subcellularLocation>
</comment>
<comment type="induction">
    <text evidence="3">Expressed in the late phase of the viral replicative cycle.</text>
</comment>
<comment type="similarity">
    <text evidence="3">Belongs to the asfivirus E146L family.</text>
</comment>
<reference key="1">
    <citation type="submission" date="2003-03" db="EMBL/GenBank/DDBJ databases">
        <title>African swine fever virus genomes.</title>
        <authorList>
            <person name="Kutish G.F."/>
            <person name="Rock D.L."/>
        </authorList>
    </citation>
    <scope>NUCLEOTIDE SEQUENCE [LARGE SCALE GENOMIC DNA]</scope>
</reference>
<organismHost>
    <name type="scientific">Ornithodoros</name>
    <name type="common">relapsing fever ticks</name>
    <dbReference type="NCBI Taxonomy" id="6937"/>
</organismHost>
<organismHost>
    <name type="scientific">Phacochoerus aethiopicus</name>
    <name type="common">Warthog</name>
    <dbReference type="NCBI Taxonomy" id="85517"/>
</organismHost>
<organismHost>
    <name type="scientific">Phacochoerus africanus</name>
    <name type="common">Warthog</name>
    <dbReference type="NCBI Taxonomy" id="41426"/>
</organismHost>
<organismHost>
    <name type="scientific">Potamochoerus larvatus</name>
    <name type="common">Bushpig</name>
    <dbReference type="NCBI Taxonomy" id="273792"/>
</organismHost>
<organismHost>
    <name type="scientific">Sus scrofa</name>
    <name type="common">Pig</name>
    <dbReference type="NCBI Taxonomy" id="9823"/>
</organismHost>
<organism>
    <name type="scientific">African swine fever virus (isolate Warthog/Namibia/Wart80/1980)</name>
    <name type="common">ASFV</name>
    <dbReference type="NCBI Taxonomy" id="561444"/>
    <lineage>
        <taxon>Viruses</taxon>
        <taxon>Varidnaviria</taxon>
        <taxon>Bamfordvirae</taxon>
        <taxon>Nucleocytoviricota</taxon>
        <taxon>Pokkesviricetes</taxon>
        <taxon>Asfuvirales</taxon>
        <taxon>Asfarviridae</taxon>
        <taxon>Asfivirus</taxon>
        <taxon>African swine fever virus</taxon>
    </lineage>
</organism>
<name>VF146_ASFWA</name>
<gene>
    <name type="ordered locus">War-139</name>
</gene>
<dbReference type="EMBL" id="AY261366">
    <property type="status" value="NOT_ANNOTATED_CDS"/>
    <property type="molecule type" value="Genomic_DNA"/>
</dbReference>
<dbReference type="SMR" id="P0CA54"/>
<dbReference type="Proteomes" id="UP000000858">
    <property type="component" value="Segment"/>
</dbReference>
<dbReference type="GO" id="GO:0033644">
    <property type="term" value="C:host cell membrane"/>
    <property type="evidence" value="ECO:0007669"/>
    <property type="project" value="UniProtKB-SubCell"/>
</dbReference>
<dbReference type="GO" id="GO:0016020">
    <property type="term" value="C:membrane"/>
    <property type="evidence" value="ECO:0007669"/>
    <property type="project" value="UniProtKB-KW"/>
</dbReference>
<dbReference type="GO" id="GO:0044423">
    <property type="term" value="C:virion component"/>
    <property type="evidence" value="ECO:0007669"/>
    <property type="project" value="UniProtKB-KW"/>
</dbReference>
<protein>
    <recommendedName>
        <fullName>Uncharacterized protein E146L</fullName>
        <shortName>pE146L</shortName>
    </recommendedName>
</protein>
<proteinExistence type="inferred from homology"/>
<sequence length="146" mass="16134">MGGTADFVLSITIVLVILIIIAFIWYNFTGWSPFKYSKGNIVTFKTPDESSIAYMRFRNCIFTFTDPKGSLHSIDVTEVLNNMAKGFRDAQNPPSSFTLGGHCQAPLNAFSFVLPGVNDRATVVTADDAKKWENCDATLTGLQRII</sequence>
<keyword id="KW-1043">Host membrane</keyword>
<keyword id="KW-0426">Late protein</keyword>
<keyword id="KW-0472">Membrane</keyword>
<keyword id="KW-0812">Transmembrane</keyword>
<keyword id="KW-1133">Transmembrane helix</keyword>
<keyword id="KW-0946">Virion</keyword>
<evidence type="ECO:0000250" key="1">
    <source>
        <dbReference type="UniProtKB" id="Q65197"/>
    </source>
</evidence>
<evidence type="ECO:0000255" key="2"/>
<evidence type="ECO:0000305" key="3"/>
<accession>P0CA54</accession>